<organism>
    <name type="scientific">Anaeromyxobacter sp. (strain K)</name>
    <dbReference type="NCBI Taxonomy" id="447217"/>
    <lineage>
        <taxon>Bacteria</taxon>
        <taxon>Pseudomonadati</taxon>
        <taxon>Myxococcota</taxon>
        <taxon>Myxococcia</taxon>
        <taxon>Myxococcales</taxon>
        <taxon>Cystobacterineae</taxon>
        <taxon>Anaeromyxobacteraceae</taxon>
        <taxon>Anaeromyxobacter</taxon>
    </lineage>
</organism>
<feature type="chain" id="PRO_1000121085" description="DNA replication and repair protein RecF">
    <location>
        <begin position="1"/>
        <end position="372"/>
    </location>
</feature>
<feature type="binding site" evidence="1">
    <location>
        <begin position="30"/>
        <end position="37"/>
    </location>
    <ligand>
        <name>ATP</name>
        <dbReference type="ChEBI" id="CHEBI:30616"/>
    </ligand>
</feature>
<comment type="function">
    <text evidence="1">The RecF protein is involved in DNA metabolism; it is required for DNA replication and normal SOS inducibility. RecF binds preferentially to single-stranded, linear DNA. It also seems to bind ATP.</text>
</comment>
<comment type="subcellular location">
    <subcellularLocation>
        <location evidence="1">Cytoplasm</location>
    </subcellularLocation>
</comment>
<comment type="similarity">
    <text evidence="1">Belongs to the RecF family.</text>
</comment>
<name>RECF_ANASK</name>
<sequence>MKLLSLHVQDFRNLAAVALAPSPRATVLLGENGQGKTNLLEAIYFLTTLKPLRAVRLAELVRFGADQGAVAGDFEGPGGVRRVAVQVAAGGRTATLDGKALGSGARLDDYFEGLASVCFSPDDLLLVKAGPDGRRRFLDRAAFNRWPAVLGEAREYVRALRARNAALRAGPAEVEASFREPLVRAGARLLVRRRELVAELAPRLQAAFAEISGPEAPEAHLAYRAAGGVDVAHPEAEVAARLAHALEARLERDREKGFTSAGPHMDDLVLALGGKGARLYGSQGQQRALVLALKIAEIENLRAALGRPPLLLLDDVSSELDPAKNRFLLGYLAALPAQAFLTSTDRRLIEPAAGPDTAFFEVRSGVVSPLVS</sequence>
<proteinExistence type="inferred from homology"/>
<dbReference type="EMBL" id="CP001131">
    <property type="protein sequence ID" value="ACG71246.1"/>
    <property type="molecule type" value="Genomic_DNA"/>
</dbReference>
<dbReference type="RefSeq" id="WP_012524084.1">
    <property type="nucleotide sequence ID" value="NC_011145.1"/>
</dbReference>
<dbReference type="SMR" id="B4UJV1"/>
<dbReference type="KEGG" id="ank:AnaeK_0003"/>
<dbReference type="HOGENOM" id="CLU_040267_0_1_7"/>
<dbReference type="OrthoDB" id="9803889at2"/>
<dbReference type="Proteomes" id="UP000001871">
    <property type="component" value="Chromosome"/>
</dbReference>
<dbReference type="GO" id="GO:0005737">
    <property type="term" value="C:cytoplasm"/>
    <property type="evidence" value="ECO:0007669"/>
    <property type="project" value="UniProtKB-SubCell"/>
</dbReference>
<dbReference type="GO" id="GO:0005524">
    <property type="term" value="F:ATP binding"/>
    <property type="evidence" value="ECO:0007669"/>
    <property type="project" value="UniProtKB-UniRule"/>
</dbReference>
<dbReference type="GO" id="GO:0003697">
    <property type="term" value="F:single-stranded DNA binding"/>
    <property type="evidence" value="ECO:0007669"/>
    <property type="project" value="UniProtKB-UniRule"/>
</dbReference>
<dbReference type="GO" id="GO:0006260">
    <property type="term" value="P:DNA replication"/>
    <property type="evidence" value="ECO:0007669"/>
    <property type="project" value="UniProtKB-UniRule"/>
</dbReference>
<dbReference type="GO" id="GO:0000731">
    <property type="term" value="P:DNA synthesis involved in DNA repair"/>
    <property type="evidence" value="ECO:0007669"/>
    <property type="project" value="TreeGrafter"/>
</dbReference>
<dbReference type="GO" id="GO:0006302">
    <property type="term" value="P:double-strand break repair"/>
    <property type="evidence" value="ECO:0007669"/>
    <property type="project" value="TreeGrafter"/>
</dbReference>
<dbReference type="GO" id="GO:0009432">
    <property type="term" value="P:SOS response"/>
    <property type="evidence" value="ECO:0007669"/>
    <property type="project" value="UniProtKB-UniRule"/>
</dbReference>
<dbReference type="Gene3D" id="3.40.50.300">
    <property type="entry name" value="P-loop containing nucleotide triphosphate hydrolases"/>
    <property type="match status" value="1"/>
</dbReference>
<dbReference type="Gene3D" id="1.20.1050.90">
    <property type="entry name" value="RecF/RecN/SMC, N-terminal domain"/>
    <property type="match status" value="1"/>
</dbReference>
<dbReference type="HAMAP" id="MF_00365">
    <property type="entry name" value="RecF"/>
    <property type="match status" value="1"/>
</dbReference>
<dbReference type="InterPro" id="IPR001238">
    <property type="entry name" value="DNA-binding_RecF"/>
</dbReference>
<dbReference type="InterPro" id="IPR018078">
    <property type="entry name" value="DNA-binding_RecF_CS"/>
</dbReference>
<dbReference type="InterPro" id="IPR027417">
    <property type="entry name" value="P-loop_NTPase"/>
</dbReference>
<dbReference type="InterPro" id="IPR003395">
    <property type="entry name" value="RecF/RecN/SMC_N"/>
</dbReference>
<dbReference type="InterPro" id="IPR042174">
    <property type="entry name" value="RecF_2"/>
</dbReference>
<dbReference type="NCBIfam" id="TIGR00611">
    <property type="entry name" value="recf"/>
    <property type="match status" value="1"/>
</dbReference>
<dbReference type="PANTHER" id="PTHR32182">
    <property type="entry name" value="DNA REPLICATION AND REPAIR PROTEIN RECF"/>
    <property type="match status" value="1"/>
</dbReference>
<dbReference type="PANTHER" id="PTHR32182:SF0">
    <property type="entry name" value="DNA REPLICATION AND REPAIR PROTEIN RECF"/>
    <property type="match status" value="1"/>
</dbReference>
<dbReference type="Pfam" id="PF02463">
    <property type="entry name" value="SMC_N"/>
    <property type="match status" value="1"/>
</dbReference>
<dbReference type="SUPFAM" id="SSF52540">
    <property type="entry name" value="P-loop containing nucleoside triphosphate hydrolases"/>
    <property type="match status" value="1"/>
</dbReference>
<dbReference type="PROSITE" id="PS00618">
    <property type="entry name" value="RECF_2"/>
    <property type="match status" value="1"/>
</dbReference>
<accession>B4UJV1</accession>
<evidence type="ECO:0000255" key="1">
    <source>
        <dbReference type="HAMAP-Rule" id="MF_00365"/>
    </source>
</evidence>
<reference key="1">
    <citation type="submission" date="2008-08" db="EMBL/GenBank/DDBJ databases">
        <title>Complete sequence of Anaeromyxobacter sp. K.</title>
        <authorList>
            <consortium name="US DOE Joint Genome Institute"/>
            <person name="Lucas S."/>
            <person name="Copeland A."/>
            <person name="Lapidus A."/>
            <person name="Glavina del Rio T."/>
            <person name="Dalin E."/>
            <person name="Tice H."/>
            <person name="Bruce D."/>
            <person name="Goodwin L."/>
            <person name="Pitluck S."/>
            <person name="Saunders E."/>
            <person name="Brettin T."/>
            <person name="Detter J.C."/>
            <person name="Han C."/>
            <person name="Larimer F."/>
            <person name="Land M."/>
            <person name="Hauser L."/>
            <person name="Kyrpides N."/>
            <person name="Ovchinnikiva G."/>
            <person name="Beliaev A."/>
        </authorList>
    </citation>
    <scope>NUCLEOTIDE SEQUENCE [LARGE SCALE GENOMIC DNA]</scope>
    <source>
        <strain>K</strain>
    </source>
</reference>
<gene>
    <name evidence="1" type="primary">recF</name>
    <name type="ordered locus">AnaeK_0003</name>
</gene>
<protein>
    <recommendedName>
        <fullName evidence="1">DNA replication and repair protein RecF</fullName>
    </recommendedName>
</protein>
<keyword id="KW-0067">ATP-binding</keyword>
<keyword id="KW-0963">Cytoplasm</keyword>
<keyword id="KW-0227">DNA damage</keyword>
<keyword id="KW-0234">DNA repair</keyword>
<keyword id="KW-0235">DNA replication</keyword>
<keyword id="KW-0238">DNA-binding</keyword>
<keyword id="KW-0547">Nucleotide-binding</keyword>
<keyword id="KW-0742">SOS response</keyword>